<accession>Q5BH14</accession>
<accession>C8VQ44</accession>
<gene>
    <name type="primary">nuf2</name>
    <name type="ORF">AN0166</name>
</gene>
<feature type="chain" id="PRO_0000246651" description="Probable kinetochore protein nuf2">
    <location>
        <begin position="1"/>
        <end position="463"/>
    </location>
</feature>
<feature type="region of interest" description="Disordered" evidence="3">
    <location>
        <begin position="1"/>
        <end position="27"/>
    </location>
</feature>
<feature type="region of interest" description="Disordered" evidence="3">
    <location>
        <begin position="331"/>
        <end position="354"/>
    </location>
</feature>
<feature type="coiled-coil region" evidence="2">
    <location>
        <begin position="166"/>
        <end position="455"/>
    </location>
</feature>
<feature type="compositionally biased region" description="Polar residues" evidence="3">
    <location>
        <begin position="1"/>
        <end position="18"/>
    </location>
</feature>
<feature type="compositionally biased region" description="Basic and acidic residues" evidence="3">
    <location>
        <begin position="337"/>
        <end position="354"/>
    </location>
</feature>
<protein>
    <recommendedName>
        <fullName>Probable kinetochore protein nuf2</fullName>
    </recommendedName>
</protein>
<name>NUF2_EMENI</name>
<proteinExistence type="inferred from homology"/>
<reference key="1">
    <citation type="journal article" date="2005" name="Nature">
        <title>Sequencing of Aspergillus nidulans and comparative analysis with A. fumigatus and A. oryzae.</title>
        <authorList>
            <person name="Galagan J.E."/>
            <person name="Calvo S.E."/>
            <person name="Cuomo C."/>
            <person name="Ma L.-J."/>
            <person name="Wortman J.R."/>
            <person name="Batzoglou S."/>
            <person name="Lee S.-I."/>
            <person name="Bastuerkmen M."/>
            <person name="Spevak C.C."/>
            <person name="Clutterbuck J."/>
            <person name="Kapitonov V."/>
            <person name="Jurka J."/>
            <person name="Scazzocchio C."/>
            <person name="Farman M.L."/>
            <person name="Butler J."/>
            <person name="Purcell S."/>
            <person name="Harris S."/>
            <person name="Braus G.H."/>
            <person name="Draht O."/>
            <person name="Busch S."/>
            <person name="D'Enfert C."/>
            <person name="Bouchier C."/>
            <person name="Goldman G.H."/>
            <person name="Bell-Pedersen D."/>
            <person name="Griffiths-Jones S."/>
            <person name="Doonan J.H."/>
            <person name="Yu J."/>
            <person name="Vienken K."/>
            <person name="Pain A."/>
            <person name="Freitag M."/>
            <person name="Selker E.U."/>
            <person name="Archer D.B."/>
            <person name="Penalva M.A."/>
            <person name="Oakley B.R."/>
            <person name="Momany M."/>
            <person name="Tanaka T."/>
            <person name="Kumagai T."/>
            <person name="Asai K."/>
            <person name="Machida M."/>
            <person name="Nierman W.C."/>
            <person name="Denning D.W."/>
            <person name="Caddick M.X."/>
            <person name="Hynes M."/>
            <person name="Paoletti M."/>
            <person name="Fischer R."/>
            <person name="Miller B.L."/>
            <person name="Dyer P.S."/>
            <person name="Sachs M.S."/>
            <person name="Osmani S.A."/>
            <person name="Birren B.W."/>
        </authorList>
    </citation>
    <scope>NUCLEOTIDE SEQUENCE [LARGE SCALE GENOMIC DNA]</scope>
    <source>
        <strain>FGSC A4 / ATCC 38163 / CBS 112.46 / NRRL 194 / M139</strain>
    </source>
</reference>
<reference key="2">
    <citation type="journal article" date="2009" name="Fungal Genet. Biol.">
        <title>The 2008 update of the Aspergillus nidulans genome annotation: a community effort.</title>
        <authorList>
            <person name="Wortman J.R."/>
            <person name="Gilsenan J.M."/>
            <person name="Joardar V."/>
            <person name="Deegan J."/>
            <person name="Clutterbuck J."/>
            <person name="Andersen M.R."/>
            <person name="Archer D."/>
            <person name="Bencina M."/>
            <person name="Braus G."/>
            <person name="Coutinho P."/>
            <person name="von Dohren H."/>
            <person name="Doonan J."/>
            <person name="Driessen A.J."/>
            <person name="Durek P."/>
            <person name="Espeso E."/>
            <person name="Fekete E."/>
            <person name="Flipphi M."/>
            <person name="Estrada C.G."/>
            <person name="Geysens S."/>
            <person name="Goldman G."/>
            <person name="de Groot P.W."/>
            <person name="Hansen K."/>
            <person name="Harris S.D."/>
            <person name="Heinekamp T."/>
            <person name="Helmstaedt K."/>
            <person name="Henrissat B."/>
            <person name="Hofmann G."/>
            <person name="Homan T."/>
            <person name="Horio T."/>
            <person name="Horiuchi H."/>
            <person name="James S."/>
            <person name="Jones M."/>
            <person name="Karaffa L."/>
            <person name="Karanyi Z."/>
            <person name="Kato M."/>
            <person name="Keller N."/>
            <person name="Kelly D.E."/>
            <person name="Kiel J.A."/>
            <person name="Kim J.M."/>
            <person name="van der Klei I.J."/>
            <person name="Klis F.M."/>
            <person name="Kovalchuk A."/>
            <person name="Krasevec N."/>
            <person name="Kubicek C.P."/>
            <person name="Liu B."/>
            <person name="Maccabe A."/>
            <person name="Meyer V."/>
            <person name="Mirabito P."/>
            <person name="Miskei M."/>
            <person name="Mos M."/>
            <person name="Mullins J."/>
            <person name="Nelson D.R."/>
            <person name="Nielsen J."/>
            <person name="Oakley B.R."/>
            <person name="Osmani S.A."/>
            <person name="Pakula T."/>
            <person name="Paszewski A."/>
            <person name="Paulsen I."/>
            <person name="Pilsyk S."/>
            <person name="Pocsi I."/>
            <person name="Punt P.J."/>
            <person name="Ram A.F."/>
            <person name="Ren Q."/>
            <person name="Robellet X."/>
            <person name="Robson G."/>
            <person name="Seiboth B."/>
            <person name="van Solingen P."/>
            <person name="Specht T."/>
            <person name="Sun J."/>
            <person name="Taheri-Talesh N."/>
            <person name="Takeshita N."/>
            <person name="Ussery D."/>
            <person name="vanKuyk P.A."/>
            <person name="Visser H."/>
            <person name="van de Vondervoort P.J."/>
            <person name="de Vries R.P."/>
            <person name="Walton J."/>
            <person name="Xiang X."/>
            <person name="Xiong Y."/>
            <person name="Zeng A.P."/>
            <person name="Brandt B.W."/>
            <person name="Cornell M.J."/>
            <person name="van den Hondel C.A."/>
            <person name="Visser J."/>
            <person name="Oliver S.G."/>
            <person name="Turner G."/>
        </authorList>
    </citation>
    <scope>GENOME REANNOTATION</scope>
    <source>
        <strain>FGSC A4 / ATCC 38163 / CBS 112.46 / NRRL 194 / M139</strain>
    </source>
</reference>
<keyword id="KW-0131">Cell cycle</keyword>
<keyword id="KW-0132">Cell division</keyword>
<keyword id="KW-0137">Centromere</keyword>
<keyword id="KW-0158">Chromosome</keyword>
<keyword id="KW-0175">Coiled coil</keyword>
<keyword id="KW-0995">Kinetochore</keyword>
<keyword id="KW-0498">Mitosis</keyword>
<keyword id="KW-0539">Nucleus</keyword>
<keyword id="KW-1185">Reference proteome</keyword>
<comment type="function">
    <text evidence="1">Acts as a component of the essential kinetochore-associated NDC80 complex, which is required for chromosome segregation and spindle checkpoint activity.</text>
</comment>
<comment type="subunit">
    <text evidence="1">Component of the NDC80 complex, which consists of ndc80, nuf2, spc24 and spc25.</text>
</comment>
<comment type="subcellular location">
    <subcellularLocation>
        <location evidence="1">Nucleus</location>
    </subcellularLocation>
    <subcellularLocation>
        <location evidence="1">Chromosome</location>
        <location evidence="1">Centromere</location>
        <location evidence="1">Kinetochore</location>
    </subcellularLocation>
    <text evidence="1">Associated with kinetochores.</text>
</comment>
<comment type="similarity">
    <text evidence="4">Belongs to the NUF2 family.</text>
</comment>
<comment type="sequence caution" evidence="4">
    <conflict type="erroneous initiation">
        <sequence resource="EMBL-CDS" id="CBF90058"/>
    </conflict>
    <text>Truncated N-terminus.</text>
</comment>
<comment type="sequence caution" evidence="4">
    <conflict type="erroneous initiation">
        <sequence resource="EMBL-CDS" id="EAA66039"/>
    </conflict>
    <text>Truncated N-terminus.</text>
</comment>
<organism>
    <name type="scientific">Emericella nidulans (strain FGSC A4 / ATCC 38163 / CBS 112.46 / NRRL 194 / M139)</name>
    <name type="common">Aspergillus nidulans</name>
    <dbReference type="NCBI Taxonomy" id="227321"/>
    <lineage>
        <taxon>Eukaryota</taxon>
        <taxon>Fungi</taxon>
        <taxon>Dikarya</taxon>
        <taxon>Ascomycota</taxon>
        <taxon>Pezizomycotina</taxon>
        <taxon>Eurotiomycetes</taxon>
        <taxon>Eurotiomycetidae</taxon>
        <taxon>Eurotiales</taxon>
        <taxon>Aspergillaceae</taxon>
        <taxon>Aspergillus</taxon>
        <taxon>Aspergillus subgen. Nidulantes</taxon>
    </lineage>
</organism>
<sequence>MAYNHRISQQFHSSQQHGRGSRKKEDENDALMRLPDKEIAGCINDIGIPFTAADLIKPNPQQVQMVLEWFAELLMNTTRETVEPAMRAAADDICGDFPDIVPTDTRNLMGFFVNMRRLMAECGVNDFTFTDLTKPTHDRLVKIFSYLINFVRFRESQTAVIDEHFNKTEKTKQRIETLYTENQEMEQRLEEMRRVLKANEAEVKEKVRRNDELKSRLRELGRTQEKVAETLERVKAEKARQQNLLKEKMERTVRTRQEVEKLRPYVMESPASLQSSLTELSESLLREKNQIDAMEKRARALQTSSDTFTVVSNDVQACIKLLEDIAVELQKEEDEESRASRNKEAISERGNNVREVEQTEKLLQRQLARWNERIEALRNTAHEKAQVAQKRMEELREVQIKLREERTEKQRDMERRRIRIEQTEKKMADLKESIETEIQSAHDEYLKLESHIKLYITEMEKSL</sequence>
<dbReference type="EMBL" id="AACD01000005">
    <property type="protein sequence ID" value="EAA66039.1"/>
    <property type="status" value="ALT_INIT"/>
    <property type="molecule type" value="Genomic_DNA"/>
</dbReference>
<dbReference type="EMBL" id="BN001308">
    <property type="protein sequence ID" value="CBF90058.1"/>
    <property type="status" value="ALT_INIT"/>
    <property type="molecule type" value="Genomic_DNA"/>
</dbReference>
<dbReference type="RefSeq" id="XP_657770.1">
    <property type="nucleotide sequence ID" value="XM_652678.1"/>
</dbReference>
<dbReference type="SMR" id="Q5BH14"/>
<dbReference type="FunCoup" id="Q5BH14">
    <property type="interactions" value="269"/>
</dbReference>
<dbReference type="STRING" id="227321.Q5BH14"/>
<dbReference type="KEGG" id="ani:ANIA_00166"/>
<dbReference type="VEuPathDB" id="FungiDB:AN0166"/>
<dbReference type="eggNOG" id="KOG4438">
    <property type="taxonomic scope" value="Eukaryota"/>
</dbReference>
<dbReference type="HOGENOM" id="CLU_025461_2_1_1"/>
<dbReference type="InParanoid" id="Q5BH14"/>
<dbReference type="OrthoDB" id="8194677at2759"/>
<dbReference type="Proteomes" id="UP000000560">
    <property type="component" value="Chromosome VIII"/>
</dbReference>
<dbReference type="GO" id="GO:0031262">
    <property type="term" value="C:Ndc80 complex"/>
    <property type="evidence" value="ECO:0000250"/>
    <property type="project" value="UniProtKB"/>
</dbReference>
<dbReference type="GO" id="GO:0005634">
    <property type="term" value="C:nucleus"/>
    <property type="evidence" value="ECO:0007669"/>
    <property type="project" value="UniProtKB-SubCell"/>
</dbReference>
<dbReference type="GO" id="GO:0008017">
    <property type="term" value="F:microtubule binding"/>
    <property type="evidence" value="ECO:0000250"/>
    <property type="project" value="UniProtKB"/>
</dbReference>
<dbReference type="GO" id="GO:0044877">
    <property type="term" value="F:protein-containing complex binding"/>
    <property type="evidence" value="ECO:0000318"/>
    <property type="project" value="GO_Central"/>
</dbReference>
<dbReference type="GO" id="GO:0051315">
    <property type="term" value="P:attachment of mitotic spindle microtubules to kinetochore"/>
    <property type="evidence" value="ECO:0000318"/>
    <property type="project" value="GO_Central"/>
</dbReference>
<dbReference type="GO" id="GO:0051301">
    <property type="term" value="P:cell division"/>
    <property type="evidence" value="ECO:0007669"/>
    <property type="project" value="UniProtKB-KW"/>
</dbReference>
<dbReference type="GO" id="GO:0051383">
    <property type="term" value="P:kinetochore organization"/>
    <property type="evidence" value="ECO:0000318"/>
    <property type="project" value="GO_Central"/>
</dbReference>
<dbReference type="GO" id="GO:0045132">
    <property type="term" value="P:meiotic chromosome segregation"/>
    <property type="evidence" value="ECO:0000318"/>
    <property type="project" value="GO_Central"/>
</dbReference>
<dbReference type="GO" id="GO:0007052">
    <property type="term" value="P:mitotic spindle organization"/>
    <property type="evidence" value="ECO:0000318"/>
    <property type="project" value="GO_Central"/>
</dbReference>
<dbReference type="FunFam" id="1.10.418.60:FF:000003">
    <property type="entry name" value="Probable kinetochore protein nuf2"/>
    <property type="match status" value="1"/>
</dbReference>
<dbReference type="Gene3D" id="1.10.418.60">
    <property type="entry name" value="Ncd80 complex, Nuf2 subunit"/>
    <property type="match status" value="1"/>
</dbReference>
<dbReference type="InterPro" id="IPR005549">
    <property type="entry name" value="Kinetochore_Nuf2_N"/>
</dbReference>
<dbReference type="InterPro" id="IPR041112">
    <property type="entry name" value="Nuf2_DHR10-like"/>
</dbReference>
<dbReference type="InterPro" id="IPR038275">
    <property type="entry name" value="Nuf2_N_sf"/>
</dbReference>
<dbReference type="PANTHER" id="PTHR21650:SF2">
    <property type="entry name" value="KINETOCHORE PROTEIN NUF2"/>
    <property type="match status" value="1"/>
</dbReference>
<dbReference type="PANTHER" id="PTHR21650">
    <property type="entry name" value="MEMBRALIN/KINETOCHORE PROTEIN NUF2"/>
    <property type="match status" value="1"/>
</dbReference>
<dbReference type="Pfam" id="PF03800">
    <property type="entry name" value="Nuf2"/>
    <property type="match status" value="1"/>
</dbReference>
<dbReference type="Pfam" id="PF18595">
    <property type="entry name" value="Nuf2_DHR10-like"/>
    <property type="match status" value="1"/>
</dbReference>
<evidence type="ECO:0000250" key="1"/>
<evidence type="ECO:0000255" key="2"/>
<evidence type="ECO:0000256" key="3">
    <source>
        <dbReference type="SAM" id="MobiDB-lite"/>
    </source>
</evidence>
<evidence type="ECO:0000305" key="4"/>